<feature type="chain" id="PRO_0000396559" description="Lon protease">
    <location>
        <begin position="1"/>
        <end position="821"/>
    </location>
</feature>
<feature type="domain" description="Lon N-terminal" evidence="3">
    <location>
        <begin position="18"/>
        <end position="216"/>
    </location>
</feature>
<feature type="domain" description="Lon proteolytic" evidence="2">
    <location>
        <begin position="606"/>
        <end position="787"/>
    </location>
</feature>
<feature type="active site" evidence="1">
    <location>
        <position position="693"/>
    </location>
</feature>
<feature type="active site" evidence="1">
    <location>
        <position position="736"/>
    </location>
</feature>
<feature type="binding site" evidence="1">
    <location>
        <begin position="368"/>
        <end position="375"/>
    </location>
    <ligand>
        <name>ATP</name>
        <dbReference type="ChEBI" id="CHEBI:30616"/>
    </ligand>
</feature>
<organism>
    <name type="scientific">Nitratidesulfovibrio vulgaris (strain ATCC 29579 / DSM 644 / CCUG 34227 / NCIMB 8303 / VKM B-1760 / Hildenborough)</name>
    <name type="common">Desulfovibrio vulgaris</name>
    <dbReference type="NCBI Taxonomy" id="882"/>
    <lineage>
        <taxon>Bacteria</taxon>
        <taxon>Pseudomonadati</taxon>
        <taxon>Thermodesulfobacteriota</taxon>
        <taxon>Desulfovibrionia</taxon>
        <taxon>Desulfovibrionales</taxon>
        <taxon>Desulfovibrionaceae</taxon>
        <taxon>Nitratidesulfovibrio</taxon>
    </lineage>
</organism>
<sequence length="821" mass="91617">MTDTGREGLQNREEGFELPLMSLREVVMFPRSIVPLFVGREASIKAIESAISDYGKKIFLVAQREPELEKPGPEDLFEVGTVSKILQLLRLPDGTIKVLFEGLYRARWDGTADAIIGADDAYPRVRVTRIEQESSEDDDEALVRATHEALDEYGKINKKLAQETLVAISALSDAARLADAIMPHLKVDYRRKQELLEVESGAERLEKVYELLQGEIAVASLEKRIKSRVKNQMERNQREYYLNEQIKAIHKEMGREDDPQAEVNELEARLAEKSMPEEAREKALREMKKLRQMPPSSAEYTVVRNYVDWILDLPWNTLKETEIDIDNARSILDADHYGLEKPKERILEYLAVQKLVNRLKGPILCLVGPPGVGKTSLAKSVAKATGREFVRLSLGGVRDEAEIRGHRRTYVGALPGKIIQSLKRVKHNNPLFCLDEIDKMSTDFRGDPSSALLEVLDPEQNSTFNDHYLDMDYDLSQVFFITTANSLHSIPLPLQDRMEIIRLPGYLETEKRRIAHDFLLPKQVEAHGLAASNLRISDNAVLEIIRSYTREAGVRNLEREIASVCRKAAMQVVEAGDKEKTLTVSRQNLGNFLGVKKYRHGEREDTSQVGVCTGLAWTEMGGELLVVETALMPGSGRVEITGKLGDVMTESAKAALSYLRSRSDLFGLRPDFHKEIDIHVHVPEGATPKDGPSAGITLATSMVSALLGIPVRNDVAMTGEITLRGRVLPIGGLREKLLAAHRGQIGKVLVPRENEKDLKEVPGEILKGLEIVFVDHVDEVLPQALMAQAESIFGGRTQSTPLYAKLRKDAQDGGATMPTAQ</sequence>
<protein>
    <recommendedName>
        <fullName evidence="1">Lon protease</fullName>
        <ecNumber evidence="1">3.4.21.53</ecNumber>
    </recommendedName>
    <alternativeName>
        <fullName evidence="1">ATP-dependent protease La</fullName>
    </alternativeName>
</protein>
<dbReference type="EC" id="3.4.21.53" evidence="1"/>
<dbReference type="EMBL" id="AE017285">
    <property type="protein sequence ID" value="AAS95815.1"/>
    <property type="molecule type" value="Genomic_DNA"/>
</dbReference>
<dbReference type="RefSeq" id="WP_010938632.1">
    <property type="nucleotide sequence ID" value="NC_002937.3"/>
</dbReference>
<dbReference type="RefSeq" id="YP_010556.1">
    <property type="nucleotide sequence ID" value="NC_002937.3"/>
</dbReference>
<dbReference type="SMR" id="Q72CE6"/>
<dbReference type="IntAct" id="Q72CE6">
    <property type="interactions" value="4"/>
</dbReference>
<dbReference type="STRING" id="882.DVU_1337"/>
<dbReference type="MEROPS" id="S16.001"/>
<dbReference type="PaxDb" id="882-DVU_1337"/>
<dbReference type="EnsemblBacteria" id="AAS95815">
    <property type="protein sequence ID" value="AAS95815"/>
    <property type="gene ID" value="DVU_1337"/>
</dbReference>
<dbReference type="KEGG" id="dvu:DVU_1337"/>
<dbReference type="PATRIC" id="fig|882.5.peg.1248"/>
<dbReference type="eggNOG" id="COG0466">
    <property type="taxonomic scope" value="Bacteria"/>
</dbReference>
<dbReference type="HOGENOM" id="CLU_004109_4_3_7"/>
<dbReference type="OrthoDB" id="9803599at2"/>
<dbReference type="PhylomeDB" id="Q72CE6"/>
<dbReference type="Proteomes" id="UP000002194">
    <property type="component" value="Chromosome"/>
</dbReference>
<dbReference type="GO" id="GO:0005737">
    <property type="term" value="C:cytoplasm"/>
    <property type="evidence" value="ECO:0007669"/>
    <property type="project" value="UniProtKB-SubCell"/>
</dbReference>
<dbReference type="GO" id="GO:0005524">
    <property type="term" value="F:ATP binding"/>
    <property type="evidence" value="ECO:0007669"/>
    <property type="project" value="UniProtKB-UniRule"/>
</dbReference>
<dbReference type="GO" id="GO:0016887">
    <property type="term" value="F:ATP hydrolysis activity"/>
    <property type="evidence" value="ECO:0007669"/>
    <property type="project" value="UniProtKB-UniRule"/>
</dbReference>
<dbReference type="GO" id="GO:0004176">
    <property type="term" value="F:ATP-dependent peptidase activity"/>
    <property type="evidence" value="ECO:0007669"/>
    <property type="project" value="UniProtKB-UniRule"/>
</dbReference>
<dbReference type="GO" id="GO:0043565">
    <property type="term" value="F:sequence-specific DNA binding"/>
    <property type="evidence" value="ECO:0007669"/>
    <property type="project" value="UniProtKB-UniRule"/>
</dbReference>
<dbReference type="GO" id="GO:0004252">
    <property type="term" value="F:serine-type endopeptidase activity"/>
    <property type="evidence" value="ECO:0007669"/>
    <property type="project" value="UniProtKB-UniRule"/>
</dbReference>
<dbReference type="GO" id="GO:0034605">
    <property type="term" value="P:cellular response to heat"/>
    <property type="evidence" value="ECO:0007669"/>
    <property type="project" value="UniProtKB-UniRule"/>
</dbReference>
<dbReference type="GO" id="GO:0006515">
    <property type="term" value="P:protein quality control for misfolded or incompletely synthesized proteins"/>
    <property type="evidence" value="ECO:0007669"/>
    <property type="project" value="UniProtKB-UniRule"/>
</dbReference>
<dbReference type="CDD" id="cd19500">
    <property type="entry name" value="RecA-like_Lon"/>
    <property type="match status" value="1"/>
</dbReference>
<dbReference type="FunFam" id="1.20.5.5270:FF:000002">
    <property type="entry name" value="Lon protease homolog"/>
    <property type="match status" value="1"/>
</dbReference>
<dbReference type="FunFam" id="3.40.50.300:FF:000021">
    <property type="entry name" value="Lon protease homolog"/>
    <property type="match status" value="1"/>
</dbReference>
<dbReference type="Gene3D" id="1.10.8.60">
    <property type="match status" value="1"/>
</dbReference>
<dbReference type="Gene3D" id="1.20.5.5270">
    <property type="match status" value="1"/>
</dbReference>
<dbReference type="Gene3D" id="1.20.58.1480">
    <property type="match status" value="1"/>
</dbReference>
<dbReference type="Gene3D" id="3.30.230.10">
    <property type="match status" value="1"/>
</dbReference>
<dbReference type="Gene3D" id="2.30.130.40">
    <property type="entry name" value="LON domain-like"/>
    <property type="match status" value="1"/>
</dbReference>
<dbReference type="Gene3D" id="3.40.50.300">
    <property type="entry name" value="P-loop containing nucleotide triphosphate hydrolases"/>
    <property type="match status" value="1"/>
</dbReference>
<dbReference type="HAMAP" id="MF_01973">
    <property type="entry name" value="lon_bact"/>
    <property type="match status" value="1"/>
</dbReference>
<dbReference type="InterPro" id="IPR003593">
    <property type="entry name" value="AAA+_ATPase"/>
</dbReference>
<dbReference type="InterPro" id="IPR003959">
    <property type="entry name" value="ATPase_AAA_core"/>
</dbReference>
<dbReference type="InterPro" id="IPR027543">
    <property type="entry name" value="Lon_bac"/>
</dbReference>
<dbReference type="InterPro" id="IPR004815">
    <property type="entry name" value="Lon_bac/euk-typ"/>
</dbReference>
<dbReference type="InterPro" id="IPR054594">
    <property type="entry name" value="Lon_lid"/>
</dbReference>
<dbReference type="InterPro" id="IPR008269">
    <property type="entry name" value="Lon_proteolytic"/>
</dbReference>
<dbReference type="InterPro" id="IPR027065">
    <property type="entry name" value="Lon_Prtase"/>
</dbReference>
<dbReference type="InterPro" id="IPR003111">
    <property type="entry name" value="Lon_prtase_N"/>
</dbReference>
<dbReference type="InterPro" id="IPR046336">
    <property type="entry name" value="Lon_prtase_N_sf"/>
</dbReference>
<dbReference type="InterPro" id="IPR027417">
    <property type="entry name" value="P-loop_NTPase"/>
</dbReference>
<dbReference type="InterPro" id="IPR008268">
    <property type="entry name" value="Peptidase_S16_AS"/>
</dbReference>
<dbReference type="InterPro" id="IPR015947">
    <property type="entry name" value="PUA-like_sf"/>
</dbReference>
<dbReference type="InterPro" id="IPR020568">
    <property type="entry name" value="Ribosomal_Su5_D2-typ_SF"/>
</dbReference>
<dbReference type="InterPro" id="IPR014721">
    <property type="entry name" value="Ribsml_uS5_D2-typ_fold_subgr"/>
</dbReference>
<dbReference type="NCBIfam" id="TIGR00763">
    <property type="entry name" value="lon"/>
    <property type="match status" value="1"/>
</dbReference>
<dbReference type="NCBIfam" id="NF008053">
    <property type="entry name" value="PRK10787.1"/>
    <property type="match status" value="1"/>
</dbReference>
<dbReference type="PANTHER" id="PTHR10046">
    <property type="entry name" value="ATP DEPENDENT LON PROTEASE FAMILY MEMBER"/>
    <property type="match status" value="1"/>
</dbReference>
<dbReference type="Pfam" id="PF00004">
    <property type="entry name" value="AAA"/>
    <property type="match status" value="1"/>
</dbReference>
<dbReference type="Pfam" id="PF05362">
    <property type="entry name" value="Lon_C"/>
    <property type="match status" value="1"/>
</dbReference>
<dbReference type="Pfam" id="PF22667">
    <property type="entry name" value="Lon_lid"/>
    <property type="match status" value="1"/>
</dbReference>
<dbReference type="Pfam" id="PF02190">
    <property type="entry name" value="LON_substr_bdg"/>
    <property type="match status" value="1"/>
</dbReference>
<dbReference type="PIRSF" id="PIRSF001174">
    <property type="entry name" value="Lon_proteas"/>
    <property type="match status" value="1"/>
</dbReference>
<dbReference type="PRINTS" id="PR00830">
    <property type="entry name" value="ENDOLAPTASE"/>
</dbReference>
<dbReference type="SMART" id="SM00382">
    <property type="entry name" value="AAA"/>
    <property type="match status" value="1"/>
</dbReference>
<dbReference type="SMART" id="SM00464">
    <property type="entry name" value="LON"/>
    <property type="match status" value="1"/>
</dbReference>
<dbReference type="SUPFAM" id="SSF52540">
    <property type="entry name" value="P-loop containing nucleoside triphosphate hydrolases"/>
    <property type="match status" value="1"/>
</dbReference>
<dbReference type="SUPFAM" id="SSF88697">
    <property type="entry name" value="PUA domain-like"/>
    <property type="match status" value="1"/>
</dbReference>
<dbReference type="SUPFAM" id="SSF54211">
    <property type="entry name" value="Ribosomal protein S5 domain 2-like"/>
    <property type="match status" value="1"/>
</dbReference>
<dbReference type="PROSITE" id="PS51787">
    <property type="entry name" value="LON_N"/>
    <property type="match status" value="1"/>
</dbReference>
<dbReference type="PROSITE" id="PS51786">
    <property type="entry name" value="LON_PROTEOLYTIC"/>
    <property type="match status" value="1"/>
</dbReference>
<dbReference type="PROSITE" id="PS01046">
    <property type="entry name" value="LON_SER"/>
    <property type="match status" value="1"/>
</dbReference>
<accession>Q72CE6</accession>
<reference key="1">
    <citation type="journal article" date="2004" name="Nat. Biotechnol.">
        <title>The genome sequence of the anaerobic, sulfate-reducing bacterium Desulfovibrio vulgaris Hildenborough.</title>
        <authorList>
            <person name="Heidelberg J.F."/>
            <person name="Seshadri R."/>
            <person name="Haveman S.A."/>
            <person name="Hemme C.L."/>
            <person name="Paulsen I.T."/>
            <person name="Kolonay J.F."/>
            <person name="Eisen J.A."/>
            <person name="Ward N.L."/>
            <person name="Methe B.A."/>
            <person name="Brinkac L.M."/>
            <person name="Daugherty S.C."/>
            <person name="DeBoy R.T."/>
            <person name="Dodson R.J."/>
            <person name="Durkin A.S."/>
            <person name="Madupu R."/>
            <person name="Nelson W.C."/>
            <person name="Sullivan S.A."/>
            <person name="Fouts D.E."/>
            <person name="Haft D.H."/>
            <person name="Selengut J."/>
            <person name="Peterson J.D."/>
            <person name="Davidsen T.M."/>
            <person name="Zafar N."/>
            <person name="Zhou L."/>
            <person name="Radune D."/>
            <person name="Dimitrov G."/>
            <person name="Hance M."/>
            <person name="Tran K."/>
            <person name="Khouri H.M."/>
            <person name="Gill J."/>
            <person name="Utterback T.R."/>
            <person name="Feldblyum T.V."/>
            <person name="Wall J.D."/>
            <person name="Voordouw G."/>
            <person name="Fraser C.M."/>
        </authorList>
    </citation>
    <scope>NUCLEOTIDE SEQUENCE [LARGE SCALE GENOMIC DNA]</scope>
    <source>
        <strain>ATCC 29579 / DSM 644 / CCUG 34227 / NCIMB 8303 / VKM B-1760 / Hildenborough</strain>
    </source>
</reference>
<gene>
    <name evidence="1" type="primary">lon</name>
    <name type="ordered locus">DVU_1337</name>
</gene>
<comment type="function">
    <text evidence="1">ATP-dependent serine protease that mediates the selective degradation of mutant and abnormal proteins as well as certain short-lived regulatory proteins. Required for cellular homeostasis and for survival from DNA damage and developmental changes induced by stress. Degrades polypeptides processively to yield small peptide fragments that are 5 to 10 amino acids long. Binds to DNA in a double-stranded, site-specific manner.</text>
</comment>
<comment type="catalytic activity">
    <reaction evidence="1">
        <text>Hydrolysis of proteins in presence of ATP.</text>
        <dbReference type="EC" id="3.4.21.53"/>
    </reaction>
</comment>
<comment type="subunit">
    <text evidence="1">Homohexamer. Organized in a ring with a central cavity.</text>
</comment>
<comment type="subcellular location">
    <subcellularLocation>
        <location evidence="1">Cytoplasm</location>
    </subcellularLocation>
</comment>
<comment type="induction">
    <text evidence="1">By heat shock.</text>
</comment>
<comment type="similarity">
    <text evidence="1">Belongs to the peptidase S16 family.</text>
</comment>
<name>LON_NITV2</name>
<keyword id="KW-0067">ATP-binding</keyword>
<keyword id="KW-0963">Cytoplasm</keyword>
<keyword id="KW-0378">Hydrolase</keyword>
<keyword id="KW-0547">Nucleotide-binding</keyword>
<keyword id="KW-0645">Protease</keyword>
<keyword id="KW-1185">Reference proteome</keyword>
<keyword id="KW-0720">Serine protease</keyword>
<keyword id="KW-0346">Stress response</keyword>
<proteinExistence type="inferred from homology"/>
<evidence type="ECO:0000255" key="1">
    <source>
        <dbReference type="HAMAP-Rule" id="MF_01973"/>
    </source>
</evidence>
<evidence type="ECO:0000255" key="2">
    <source>
        <dbReference type="PROSITE-ProRule" id="PRU01122"/>
    </source>
</evidence>
<evidence type="ECO:0000255" key="3">
    <source>
        <dbReference type="PROSITE-ProRule" id="PRU01123"/>
    </source>
</evidence>